<gene>
    <name evidence="1" type="primary">hypA</name>
    <name type="ordered locus">RPD_1173</name>
</gene>
<dbReference type="EMBL" id="CP000283">
    <property type="protein sequence ID" value="ABE38411.1"/>
    <property type="molecule type" value="Genomic_DNA"/>
</dbReference>
<dbReference type="SMR" id="Q13BX8"/>
<dbReference type="STRING" id="316057.RPD_1173"/>
<dbReference type="KEGG" id="rpd:RPD_1173"/>
<dbReference type="eggNOG" id="COG0375">
    <property type="taxonomic scope" value="Bacteria"/>
</dbReference>
<dbReference type="HOGENOM" id="CLU_126929_0_0_5"/>
<dbReference type="BioCyc" id="RPAL316057:RPD_RS05945-MONOMER"/>
<dbReference type="Proteomes" id="UP000001818">
    <property type="component" value="Chromosome"/>
</dbReference>
<dbReference type="GO" id="GO:0016151">
    <property type="term" value="F:nickel cation binding"/>
    <property type="evidence" value="ECO:0007669"/>
    <property type="project" value="UniProtKB-UniRule"/>
</dbReference>
<dbReference type="GO" id="GO:0008270">
    <property type="term" value="F:zinc ion binding"/>
    <property type="evidence" value="ECO:0007669"/>
    <property type="project" value="UniProtKB-UniRule"/>
</dbReference>
<dbReference type="GO" id="GO:0051604">
    <property type="term" value="P:protein maturation"/>
    <property type="evidence" value="ECO:0007669"/>
    <property type="project" value="InterPro"/>
</dbReference>
<dbReference type="GO" id="GO:0036211">
    <property type="term" value="P:protein modification process"/>
    <property type="evidence" value="ECO:0007669"/>
    <property type="project" value="UniProtKB-UniRule"/>
</dbReference>
<dbReference type="FunFam" id="3.30.2320.80:FF:000001">
    <property type="entry name" value="Hydrogenase maturation factor HypA"/>
    <property type="match status" value="1"/>
</dbReference>
<dbReference type="Gene3D" id="3.30.2320.80">
    <property type="match status" value="1"/>
</dbReference>
<dbReference type="HAMAP" id="MF_00213">
    <property type="entry name" value="HypA_HybF"/>
    <property type="match status" value="1"/>
</dbReference>
<dbReference type="InterPro" id="IPR000688">
    <property type="entry name" value="HypA/HybF"/>
</dbReference>
<dbReference type="NCBIfam" id="TIGR00100">
    <property type="entry name" value="hypA"/>
    <property type="match status" value="1"/>
</dbReference>
<dbReference type="NCBIfam" id="NF009046">
    <property type="entry name" value="PRK12380.1"/>
    <property type="match status" value="1"/>
</dbReference>
<dbReference type="PANTHER" id="PTHR34535">
    <property type="entry name" value="HYDROGENASE MATURATION FACTOR HYPA"/>
    <property type="match status" value="1"/>
</dbReference>
<dbReference type="PANTHER" id="PTHR34535:SF3">
    <property type="entry name" value="HYDROGENASE MATURATION FACTOR HYPA"/>
    <property type="match status" value="1"/>
</dbReference>
<dbReference type="Pfam" id="PF01155">
    <property type="entry name" value="HypA"/>
    <property type="match status" value="1"/>
</dbReference>
<dbReference type="PIRSF" id="PIRSF004761">
    <property type="entry name" value="Hydrgn_mat_HypA"/>
    <property type="match status" value="1"/>
</dbReference>
<keyword id="KW-0479">Metal-binding</keyword>
<keyword id="KW-0533">Nickel</keyword>
<keyword id="KW-0862">Zinc</keyword>
<proteinExistence type="inferred from homology"/>
<name>HYPA_RHOPS</name>
<feature type="chain" id="PRO_1000023853" description="Hydrogenase maturation factor HypA">
    <location>
        <begin position="1"/>
        <end position="113"/>
    </location>
</feature>
<feature type="binding site" evidence="1">
    <location>
        <position position="2"/>
    </location>
    <ligand>
        <name>Ni(2+)</name>
        <dbReference type="ChEBI" id="CHEBI:49786"/>
    </ligand>
</feature>
<feature type="binding site" evidence="1">
    <location>
        <position position="73"/>
    </location>
    <ligand>
        <name>Zn(2+)</name>
        <dbReference type="ChEBI" id="CHEBI:29105"/>
    </ligand>
</feature>
<feature type="binding site" evidence="1">
    <location>
        <position position="76"/>
    </location>
    <ligand>
        <name>Zn(2+)</name>
        <dbReference type="ChEBI" id="CHEBI:29105"/>
    </ligand>
</feature>
<feature type="binding site" evidence="1">
    <location>
        <position position="89"/>
    </location>
    <ligand>
        <name>Zn(2+)</name>
        <dbReference type="ChEBI" id="CHEBI:29105"/>
    </ligand>
</feature>
<feature type="binding site" evidence="1">
    <location>
        <position position="92"/>
    </location>
    <ligand>
        <name>Zn(2+)</name>
        <dbReference type="ChEBI" id="CHEBI:29105"/>
    </ligand>
</feature>
<organism>
    <name type="scientific">Rhodopseudomonas palustris (strain BisB5)</name>
    <dbReference type="NCBI Taxonomy" id="316057"/>
    <lineage>
        <taxon>Bacteria</taxon>
        <taxon>Pseudomonadati</taxon>
        <taxon>Pseudomonadota</taxon>
        <taxon>Alphaproteobacteria</taxon>
        <taxon>Hyphomicrobiales</taxon>
        <taxon>Nitrobacteraceae</taxon>
        <taxon>Rhodopseudomonas</taxon>
    </lineage>
</organism>
<sequence length="113" mass="12381">MHEMALCESMIEIIEREARDQHFARVRAVWVEIGALSHVEPEAMRFCFSAVAHGGIAADARFEIVSVSGAAWCMSCSKTVPLAQRSAPCPDCGGYQLQVTAGDELRVKELEVD</sequence>
<evidence type="ECO:0000255" key="1">
    <source>
        <dbReference type="HAMAP-Rule" id="MF_00213"/>
    </source>
</evidence>
<protein>
    <recommendedName>
        <fullName evidence="1">Hydrogenase maturation factor HypA</fullName>
    </recommendedName>
</protein>
<reference key="1">
    <citation type="submission" date="2006-03" db="EMBL/GenBank/DDBJ databases">
        <title>Complete sequence of Rhodopseudomonas palustris BisB5.</title>
        <authorList>
            <consortium name="US DOE Joint Genome Institute"/>
            <person name="Copeland A."/>
            <person name="Lucas S."/>
            <person name="Lapidus A."/>
            <person name="Barry K."/>
            <person name="Detter J.C."/>
            <person name="Glavina del Rio T."/>
            <person name="Hammon N."/>
            <person name="Israni S."/>
            <person name="Dalin E."/>
            <person name="Tice H."/>
            <person name="Pitluck S."/>
            <person name="Chain P."/>
            <person name="Malfatti S."/>
            <person name="Shin M."/>
            <person name="Vergez L."/>
            <person name="Schmutz J."/>
            <person name="Larimer F."/>
            <person name="Land M."/>
            <person name="Hauser L."/>
            <person name="Pelletier D.A."/>
            <person name="Kyrpides N."/>
            <person name="Lykidis A."/>
            <person name="Oda Y."/>
            <person name="Harwood C.S."/>
            <person name="Richardson P."/>
        </authorList>
    </citation>
    <scope>NUCLEOTIDE SEQUENCE [LARGE SCALE GENOMIC DNA]</scope>
    <source>
        <strain>BisB5</strain>
    </source>
</reference>
<accession>Q13BX8</accession>
<comment type="function">
    <text evidence="1">Involved in the maturation of [NiFe] hydrogenases. Required for nickel insertion into the metal center of the hydrogenase.</text>
</comment>
<comment type="similarity">
    <text evidence="1">Belongs to the HypA/HybF family.</text>
</comment>